<comment type="function">
    <text evidence="4 8">Involved in cell polarity control during the actin-dependent tip growth of root hairs, thus regulating root hair length and root hair initiation.</text>
</comment>
<comment type="function">
    <text evidence="4">Inactive GDP-bound Rho GTPases reside in the cytosol, are found in a complex with Rho GDP-dissociation inhibitors (Rho GDIs), and are released from the GDI protein in order to translocate to membranes upon activation.</text>
</comment>
<comment type="subunit">
    <text evidence="3 5 6 7">Interacts with GDI1 and ROPGEF8 homodimer (PubMed:10798620, PubMed:17218277, PubMed:19335195). Binds to SPK1 (PubMed:18308939).</text>
</comment>
<comment type="interaction">
    <interactant intactId="EBI-1751308">
        <id>Q38937</id>
    </interactant>
    <interactant intactId="EBI-1751328">
        <id>Q9SFC6</id>
        <label>GDI1</label>
    </interactant>
    <organismsDiffer>false</organismsDiffer>
    <experiments>2</experiments>
</comment>
<comment type="subcellular location">
    <subcellularLocation>
        <location evidence="3">Cytoplasm</location>
    </subcellularLocation>
    <subcellularLocation>
        <location evidence="3">Membrane</location>
        <topology evidence="3">Peripheral membrane protein</topology>
    </subcellularLocation>
    <subcellularLocation>
        <location evidence="1">Cell membrane</location>
        <topology evidence="2">Peripheral membrane protein</topology>
    </subcellularLocation>
    <text evidence="1">Associated with the membrane when activated. The localization to the plasma membrane requires YIP4A and YIP4B (By similarity).</text>
</comment>
<comment type="tissue specificity">
    <text evidence="4 9">Ubiquitous. Preferentially expressed at the tip of root hairs.</text>
</comment>
<comment type="developmental stage">
    <text evidence="8">In root trichoblasts, accumulates into patches at the basal end of the cell before a hair bulge is visible and remain concentrated at the tip of the bulge and in the growing hair.</text>
</comment>
<comment type="disruption phenotype">
    <text evidence="8">Fewer and shorter root hairs.</text>
</comment>
<comment type="similarity">
    <text evidence="14">Belongs to the small GTPase superfamily. Rho family.</text>
</comment>
<comment type="sequence caution" evidence="14">
    <conflict type="erroneous gene model prediction">
        <sequence resource="EMBL-CDS" id="AAF26755"/>
    </conflict>
</comment>
<organism>
    <name type="scientific">Arabidopsis thaliana</name>
    <name type="common">Mouse-ear cress</name>
    <dbReference type="NCBI Taxonomy" id="3702"/>
    <lineage>
        <taxon>Eukaryota</taxon>
        <taxon>Viridiplantae</taxon>
        <taxon>Streptophyta</taxon>
        <taxon>Embryophyta</taxon>
        <taxon>Tracheophyta</taxon>
        <taxon>Spermatophyta</taxon>
        <taxon>Magnoliopsida</taxon>
        <taxon>eudicotyledons</taxon>
        <taxon>Gunneridae</taxon>
        <taxon>Pentapetalae</taxon>
        <taxon>rosids</taxon>
        <taxon>malvids</taxon>
        <taxon>Brassicales</taxon>
        <taxon>Brassicaceae</taxon>
        <taxon>Camelineae</taxon>
        <taxon>Arabidopsis</taxon>
    </lineage>
</organism>
<feature type="chain" id="PRO_0000198919" description="Rac-like GTP-binding protein ARAC5">
    <location>
        <begin position="1"/>
        <end position="193"/>
    </location>
</feature>
<feature type="propeptide" id="PRO_0000227584" description="Removed in mature form" evidence="2">
    <location>
        <begin position="194"/>
        <end position="196"/>
    </location>
</feature>
<feature type="short sequence motif" description="Effector region" evidence="2">
    <location>
        <begin position="35"/>
        <end position="43"/>
    </location>
</feature>
<feature type="binding site">
    <location>
        <begin position="16"/>
        <end position="21"/>
    </location>
    <ligand>
        <name>GTP</name>
        <dbReference type="ChEBI" id="CHEBI:37565"/>
    </ligand>
</feature>
<feature type="binding site">
    <location>
        <begin position="119"/>
        <end position="121"/>
    </location>
    <ligand>
        <name>GTP</name>
        <dbReference type="ChEBI" id="CHEBI:37565"/>
    </ligand>
</feature>
<feature type="binding site">
    <location>
        <begin position="159"/>
        <end position="161"/>
    </location>
    <ligand>
        <name>GTP</name>
        <dbReference type="ChEBI" id="CHEBI:37565"/>
    </ligand>
</feature>
<feature type="modified residue" description="Cysteine methyl ester" evidence="2">
    <location>
        <position position="193"/>
    </location>
</feature>
<feature type="lipid moiety-binding region" description="S-geranylgeranyl cysteine" evidence="2">
    <location>
        <position position="193"/>
    </location>
</feature>
<feature type="mutagenesis site" description="Strongly impairs GEF-dependent nucleotide exchange." evidence="5">
    <original>E</original>
    <variation>A</variation>
    <location>
        <position position="65"/>
    </location>
</feature>
<feature type="sequence conflict" description="In Ref. 3; AAC78242." evidence="14" ref="3">
    <original>M</original>
    <variation>I</variation>
    <location>
        <position position="22"/>
    </location>
</feature>
<feature type="sequence conflict" description="In Ref. 1; AAD00114." evidence="14" ref="1">
    <original>IS</original>
    <variation>YC</variation>
    <location>
        <begin position="88"/>
        <end position="89"/>
    </location>
</feature>
<feature type="sequence conflict" description="In Ref. 3; AAC78242." evidence="14" ref="3">
    <original>N</original>
    <variation>H</variation>
    <location>
        <position position="95"/>
    </location>
</feature>
<feature type="sequence conflict" description="In Ref. 1; AAD00114." evidence="14" ref="1">
    <original>NKNRCVF</original>
    <variation>TKAQKACSI</variation>
    <location>
        <begin position="189"/>
        <end position="195"/>
    </location>
</feature>
<feature type="strand" evidence="17">
    <location>
        <begin position="6"/>
        <end position="13"/>
    </location>
</feature>
<feature type="helix" evidence="17">
    <location>
        <begin position="19"/>
        <end position="28"/>
    </location>
</feature>
<feature type="strand" evidence="17">
    <location>
        <begin position="43"/>
        <end position="49"/>
    </location>
</feature>
<feature type="strand" evidence="17">
    <location>
        <begin position="52"/>
        <end position="59"/>
    </location>
</feature>
<feature type="turn" evidence="17">
    <location>
        <begin position="62"/>
        <end position="65"/>
    </location>
</feature>
<feature type="strand" evidence="17">
    <location>
        <begin position="79"/>
        <end position="86"/>
    </location>
</feature>
<feature type="helix" evidence="17">
    <location>
        <begin position="90"/>
        <end position="98"/>
    </location>
</feature>
<feature type="helix" evidence="17">
    <location>
        <begin position="100"/>
        <end position="107"/>
    </location>
</feature>
<feature type="strand" evidence="17">
    <location>
        <begin position="113"/>
        <end position="118"/>
    </location>
</feature>
<feature type="helix" evidence="17">
    <location>
        <begin position="120"/>
        <end position="122"/>
    </location>
</feature>
<feature type="helix" evidence="17">
    <location>
        <begin position="126"/>
        <end position="131"/>
    </location>
</feature>
<feature type="helix" evidence="17">
    <location>
        <begin position="140"/>
        <end position="149"/>
    </location>
</feature>
<feature type="strand" evidence="17">
    <location>
        <begin position="155"/>
        <end position="157"/>
    </location>
</feature>
<feature type="turn" evidence="17">
    <location>
        <begin position="160"/>
        <end position="162"/>
    </location>
</feature>
<feature type="helix" evidence="17">
    <location>
        <begin position="166"/>
        <end position="177"/>
    </location>
</feature>
<reference key="1">
    <citation type="journal article" date="1996" name="Plant Mol. Biol.">
        <title>Identification and isoprenylation of plant GTP-binding proteins.</title>
        <authorList>
            <person name="Biermann B.J."/>
            <person name="Randall S.K."/>
            <person name="Crowell D.N."/>
        </authorList>
    </citation>
    <scope>NUCLEOTIDE SEQUENCE [MRNA]</scope>
</reference>
<reference key="2">
    <citation type="journal article" date="1997" name="Plant Mol. Biol.">
        <title>Cloning and characterization of rac-like cDNAs from Arabidopsis thaliana.</title>
        <authorList>
            <person name="Winge P."/>
            <person name="Brembu T."/>
            <person name="Bones A.M."/>
        </authorList>
    </citation>
    <scope>NUCLEOTIDE SEQUENCE [MRNA]</scope>
    <source>
        <strain>cv. Columbia</strain>
    </source>
</reference>
<reference key="3">
    <citation type="journal article" date="1998" name="Plant Physiol.">
        <title>Arabidopsis Rho-related GTPases: differential gene expression in pollen and polar localization in fission yeast.</title>
        <authorList>
            <person name="Li H."/>
            <person name="Wu G."/>
            <person name="Ware D."/>
            <person name="Davis K.R."/>
            <person name="Yang Z."/>
        </authorList>
    </citation>
    <scope>NUCLEOTIDE SEQUENCE [MRNA]</scope>
    <scope>TISSUE SPECIFICITY</scope>
    <source>
        <strain>cv. Columbia</strain>
    </source>
</reference>
<reference key="4">
    <citation type="journal article" date="2000" name="Genetics">
        <title>Genetic structure and evolution of RAC-GTPases in Arabidopsis thaliana.</title>
        <authorList>
            <person name="Winge P."/>
            <person name="Brembu T."/>
            <person name="Kristensen R."/>
            <person name="Bones A.M."/>
        </authorList>
    </citation>
    <scope>NUCLEOTIDE SEQUENCE [GENOMIC DNA]</scope>
    <source>
        <strain>cv. Landsberg erecta</strain>
    </source>
</reference>
<reference key="5">
    <citation type="journal article" date="2000" name="Nature">
        <title>Sequence and analysis of chromosome 1 of the plant Arabidopsis thaliana.</title>
        <authorList>
            <person name="Theologis A."/>
            <person name="Ecker J.R."/>
            <person name="Palm C.J."/>
            <person name="Federspiel N.A."/>
            <person name="Kaul S."/>
            <person name="White O."/>
            <person name="Alonso J."/>
            <person name="Altafi H."/>
            <person name="Araujo R."/>
            <person name="Bowman C.L."/>
            <person name="Brooks S.Y."/>
            <person name="Buehler E."/>
            <person name="Chan A."/>
            <person name="Chao Q."/>
            <person name="Chen H."/>
            <person name="Cheuk R.F."/>
            <person name="Chin C.W."/>
            <person name="Chung M.K."/>
            <person name="Conn L."/>
            <person name="Conway A.B."/>
            <person name="Conway A.R."/>
            <person name="Creasy T.H."/>
            <person name="Dewar K."/>
            <person name="Dunn P."/>
            <person name="Etgu P."/>
            <person name="Feldblyum T.V."/>
            <person name="Feng J.-D."/>
            <person name="Fong B."/>
            <person name="Fujii C.Y."/>
            <person name="Gill J.E."/>
            <person name="Goldsmith A.D."/>
            <person name="Haas B."/>
            <person name="Hansen N.F."/>
            <person name="Hughes B."/>
            <person name="Huizar L."/>
            <person name="Hunter J.L."/>
            <person name="Jenkins J."/>
            <person name="Johnson-Hopson C."/>
            <person name="Khan S."/>
            <person name="Khaykin E."/>
            <person name="Kim C.J."/>
            <person name="Koo H.L."/>
            <person name="Kremenetskaia I."/>
            <person name="Kurtz D.B."/>
            <person name="Kwan A."/>
            <person name="Lam B."/>
            <person name="Langin-Hooper S."/>
            <person name="Lee A."/>
            <person name="Lee J.M."/>
            <person name="Lenz C.A."/>
            <person name="Li J.H."/>
            <person name="Li Y.-P."/>
            <person name="Lin X."/>
            <person name="Liu S.X."/>
            <person name="Liu Z.A."/>
            <person name="Luros J.S."/>
            <person name="Maiti R."/>
            <person name="Marziali A."/>
            <person name="Militscher J."/>
            <person name="Miranda M."/>
            <person name="Nguyen M."/>
            <person name="Nierman W.C."/>
            <person name="Osborne B.I."/>
            <person name="Pai G."/>
            <person name="Peterson J."/>
            <person name="Pham P.K."/>
            <person name="Rizzo M."/>
            <person name="Rooney T."/>
            <person name="Rowley D."/>
            <person name="Sakano H."/>
            <person name="Salzberg S.L."/>
            <person name="Schwartz J.R."/>
            <person name="Shinn P."/>
            <person name="Southwick A.M."/>
            <person name="Sun H."/>
            <person name="Tallon L.J."/>
            <person name="Tambunga G."/>
            <person name="Toriumi M.J."/>
            <person name="Town C.D."/>
            <person name="Utterback T."/>
            <person name="Van Aken S."/>
            <person name="Vaysberg M."/>
            <person name="Vysotskaia V.S."/>
            <person name="Walker M."/>
            <person name="Wu D."/>
            <person name="Yu G."/>
            <person name="Fraser C.M."/>
            <person name="Venter J.C."/>
            <person name="Davis R.W."/>
        </authorList>
    </citation>
    <scope>NUCLEOTIDE SEQUENCE [LARGE SCALE GENOMIC DNA]</scope>
    <source>
        <strain>cv. Columbia</strain>
    </source>
</reference>
<reference key="6">
    <citation type="journal article" date="2017" name="Plant J.">
        <title>Araport11: a complete reannotation of the Arabidopsis thaliana reference genome.</title>
        <authorList>
            <person name="Cheng C.Y."/>
            <person name="Krishnakumar V."/>
            <person name="Chan A.P."/>
            <person name="Thibaud-Nissen F."/>
            <person name="Schobel S."/>
            <person name="Town C.D."/>
        </authorList>
    </citation>
    <scope>GENOME REANNOTATION</scope>
    <source>
        <strain>cv. Columbia</strain>
    </source>
</reference>
<reference key="7">
    <citation type="journal article" date="2003" name="Science">
        <title>Empirical analysis of transcriptional activity in the Arabidopsis genome.</title>
        <authorList>
            <person name="Yamada K."/>
            <person name="Lim J."/>
            <person name="Dale J.M."/>
            <person name="Chen H."/>
            <person name="Shinn P."/>
            <person name="Palm C.J."/>
            <person name="Southwick A.M."/>
            <person name="Wu H.C."/>
            <person name="Kim C.J."/>
            <person name="Nguyen M."/>
            <person name="Pham P.K."/>
            <person name="Cheuk R.F."/>
            <person name="Karlin-Newmann G."/>
            <person name="Liu S.X."/>
            <person name="Lam B."/>
            <person name="Sakano H."/>
            <person name="Wu T."/>
            <person name="Yu G."/>
            <person name="Miranda M."/>
            <person name="Quach H.L."/>
            <person name="Tripp M."/>
            <person name="Chang C.H."/>
            <person name="Lee J.M."/>
            <person name="Toriumi M.J."/>
            <person name="Chan M.M."/>
            <person name="Tang C.C."/>
            <person name="Onodera C.S."/>
            <person name="Deng J.M."/>
            <person name="Akiyama K."/>
            <person name="Ansari Y."/>
            <person name="Arakawa T."/>
            <person name="Banh J."/>
            <person name="Banno F."/>
            <person name="Bowser L."/>
            <person name="Brooks S.Y."/>
            <person name="Carninci P."/>
            <person name="Chao Q."/>
            <person name="Choy N."/>
            <person name="Enju A."/>
            <person name="Goldsmith A.D."/>
            <person name="Gurjal M."/>
            <person name="Hansen N.F."/>
            <person name="Hayashizaki Y."/>
            <person name="Johnson-Hopson C."/>
            <person name="Hsuan V.W."/>
            <person name="Iida K."/>
            <person name="Karnes M."/>
            <person name="Khan S."/>
            <person name="Koesema E."/>
            <person name="Ishida J."/>
            <person name="Jiang P.X."/>
            <person name="Jones T."/>
            <person name="Kawai J."/>
            <person name="Kamiya A."/>
            <person name="Meyers C."/>
            <person name="Nakajima M."/>
            <person name="Narusaka M."/>
            <person name="Seki M."/>
            <person name="Sakurai T."/>
            <person name="Satou M."/>
            <person name="Tamse R."/>
            <person name="Vaysberg M."/>
            <person name="Wallender E.K."/>
            <person name="Wong C."/>
            <person name="Yamamura Y."/>
            <person name="Yuan S."/>
            <person name="Shinozaki K."/>
            <person name="Davis R.W."/>
            <person name="Theologis A."/>
            <person name="Ecker J.R."/>
        </authorList>
    </citation>
    <scope>NUCLEOTIDE SEQUENCE [LARGE SCALE MRNA]</scope>
    <source>
        <strain>cv. Columbia</strain>
    </source>
</reference>
<reference key="8">
    <citation type="journal article" date="2000" name="Plant Mol. Biol.">
        <title>Localization of AtROP4 and AtROP6 and interaction with the guanine nucleotide dissociation inhibitor AtRhoGDI1 from Arabidopsis.</title>
        <authorList>
            <person name="Bischoff F."/>
            <person name="Vahlkamp L."/>
            <person name="Molendijk A.J."/>
            <person name="Palme K."/>
        </authorList>
    </citation>
    <scope>SUBCELLULAR LOCATION</scope>
    <scope>INTERACTION WITH RHO GDI-1</scope>
</reference>
<reference key="9">
    <citation type="journal article" date="2001" name="EMBO J.">
        <title>Arabidopsis thaliana Rop GTPases are localized to tips of root hairs and control polar growth.</title>
        <authorList>
            <person name="Molendijk A.J."/>
            <person name="Bischoff F."/>
            <person name="Rajendrakumar C.S.V."/>
            <person name="Friml J."/>
            <person name="Braun M."/>
            <person name="Gilroy S."/>
            <person name="Palme K."/>
        </authorList>
    </citation>
    <scope>FUNCTION</scope>
    <scope>TISSUE SPECIFICITY</scope>
</reference>
<reference key="10">
    <citation type="journal article" date="2008" name="Proc. Natl. Acad. Sci. U.S.A.">
        <title>A SPIKE1 signaling complex controls actin-dependent cell morphogenesis through the heteromeric WAVE and ARP2/3 complexes.</title>
        <authorList>
            <person name="Basu D."/>
            <person name="Le J."/>
            <person name="Zakharova T."/>
            <person name="Mallery E.L."/>
            <person name="Szymanski D.B."/>
        </authorList>
    </citation>
    <scope>INTERACTION WITH SPK1</scope>
    <source>
        <strain>cv. Columbia</strain>
    </source>
</reference>
<reference key="11">
    <citation type="journal article" date="2019" name="Development">
        <title>Rho-of-plant activated root hair formation requires Arabidopsis YIP4a/b gene function.</title>
        <authorList>
            <person name="Gendre D."/>
            <person name="Baral A."/>
            <person name="Dang X."/>
            <person name="Esnay N."/>
            <person name="Boutte Y."/>
            <person name="Stanislas T."/>
            <person name="Vain T."/>
            <person name="Claverol S."/>
            <person name="Gustavsson A."/>
            <person name="Lin D."/>
            <person name="Grebe M."/>
            <person name="Bhalerao R.P."/>
        </authorList>
    </citation>
    <scope>FUNCTION</scope>
    <scope>DISRUPTION PHENOTYPE</scope>
    <scope>DEVELOPMENTAL STAGE</scope>
    <source>
        <strain>cv. Columbia</strain>
    </source>
</reference>
<reference key="12">
    <citation type="journal article" date="2007" name="Mol. Cell">
        <title>Structural evidence for a common intermediate in small G protein-GEF reactions.</title>
        <authorList>
            <person name="Thomas C."/>
            <person name="Fricke I."/>
            <person name="Scrima A."/>
            <person name="Berken A."/>
            <person name="Wittinghofer A."/>
        </authorList>
    </citation>
    <scope>X-RAY CRYSTALLOGRAPHY (3.10 ANGSTROMS) OF 1-180 IN COMPLEX WITH GDP</scope>
    <scope>INTERACTION WITH ROPGEF8</scope>
    <scope>MUTAGENESIS OF GLU-65</scope>
</reference>
<reference key="13">
    <citation type="journal article" date="2009" name="Biol. Chem.">
        <title>3D structure of a binary ROP-PRONE complex: the final intermediate for a complete set of molecular snapshots of the RopGEF reaction.</title>
        <authorList>
            <person name="Thomas C."/>
            <person name="Fricke I."/>
            <person name="Weyand M."/>
            <person name="Berken A."/>
        </authorList>
    </citation>
    <scope>X-RAY CRYSTALLOGRAPHY (2.90 ANGSTROMS) OF 76-440</scope>
    <scope>INTERACTION WITH ROPGEF8</scope>
</reference>
<protein>
    <recommendedName>
        <fullName evidence="13">Rac-like GTP-binding protein ARAC5</fullName>
        <shortName evidence="11">AtRAC5</shortName>
    </recommendedName>
    <alternativeName>
        <fullName evidence="10">GTPase protein ROP4</fullName>
    </alternativeName>
</protein>
<accession>Q38937</accession>
<accession>O48545</accession>
<accession>Q9LQT0</accession>
<accession>Q9ZRD5</accession>
<keyword id="KW-0002">3D-structure</keyword>
<keyword id="KW-1003">Cell membrane</keyword>
<keyword id="KW-0963">Cytoplasm</keyword>
<keyword id="KW-0342">GTP-binding</keyword>
<keyword id="KW-0449">Lipoprotein</keyword>
<keyword id="KW-0472">Membrane</keyword>
<keyword id="KW-0488">Methylation</keyword>
<keyword id="KW-0547">Nucleotide-binding</keyword>
<keyword id="KW-0636">Prenylation</keyword>
<keyword id="KW-1185">Reference proteome</keyword>
<name>RAC5_ARATH</name>
<dbReference type="EMBL" id="U64920">
    <property type="protein sequence ID" value="AAD00114.1"/>
    <property type="molecule type" value="mRNA"/>
</dbReference>
<dbReference type="EMBL" id="U52350">
    <property type="protein sequence ID" value="AAC49855.1"/>
    <property type="molecule type" value="mRNA"/>
</dbReference>
<dbReference type="EMBL" id="AF031428">
    <property type="protein sequence ID" value="AAC78242.1"/>
    <property type="molecule type" value="mRNA"/>
</dbReference>
<dbReference type="EMBL" id="AF115472">
    <property type="protein sequence ID" value="AAF40244.1"/>
    <property type="molecule type" value="Genomic_DNA"/>
</dbReference>
<dbReference type="EMBL" id="AC007396">
    <property type="protein sequence ID" value="AAF26755.1"/>
    <property type="status" value="ALT_SEQ"/>
    <property type="molecule type" value="Genomic_DNA"/>
</dbReference>
<dbReference type="EMBL" id="CP002684">
    <property type="protein sequence ID" value="AEE35764.1"/>
    <property type="molecule type" value="Genomic_DNA"/>
</dbReference>
<dbReference type="EMBL" id="AY062800">
    <property type="protein sequence ID" value="AAL32878.1"/>
    <property type="molecule type" value="mRNA"/>
</dbReference>
<dbReference type="EMBL" id="AY081600">
    <property type="protein sequence ID" value="AAM10162.1"/>
    <property type="molecule type" value="mRNA"/>
</dbReference>
<dbReference type="PIR" id="T48865">
    <property type="entry name" value="T48865"/>
</dbReference>
<dbReference type="RefSeq" id="NP_177712.1">
    <property type="nucleotide sequence ID" value="NM_106234.3"/>
</dbReference>
<dbReference type="PDB" id="2NTY">
    <property type="method" value="X-ray"/>
    <property type="resolution" value="3.10 A"/>
    <property type="chains" value="C/D=1-180"/>
</dbReference>
<dbReference type="PDBsum" id="2NTY"/>
<dbReference type="SMR" id="Q38937"/>
<dbReference type="BioGRID" id="29136">
    <property type="interactions" value="9"/>
</dbReference>
<dbReference type="DIP" id="DIP-29820N"/>
<dbReference type="FunCoup" id="Q38937">
    <property type="interactions" value="3321"/>
</dbReference>
<dbReference type="IntAct" id="Q38937">
    <property type="interactions" value="3"/>
</dbReference>
<dbReference type="STRING" id="3702.Q38937"/>
<dbReference type="PaxDb" id="3702-AT1G75840.1"/>
<dbReference type="ProteomicsDB" id="236300"/>
<dbReference type="EnsemblPlants" id="AT1G75840.1">
    <property type="protein sequence ID" value="AT1G75840.1"/>
    <property type="gene ID" value="AT1G75840"/>
</dbReference>
<dbReference type="GeneID" id="843917"/>
<dbReference type="Gramene" id="AT1G75840.1">
    <property type="protein sequence ID" value="AT1G75840.1"/>
    <property type="gene ID" value="AT1G75840"/>
</dbReference>
<dbReference type="KEGG" id="ath:AT1G75840"/>
<dbReference type="Araport" id="AT1G75840"/>
<dbReference type="TAIR" id="AT1G75840">
    <property type="gene designation" value="ARAC5"/>
</dbReference>
<dbReference type="eggNOG" id="KOG0393">
    <property type="taxonomic scope" value="Eukaryota"/>
</dbReference>
<dbReference type="HOGENOM" id="CLU_041217_21_3_1"/>
<dbReference type="InParanoid" id="Q38937"/>
<dbReference type="OMA" id="ECSAKDK"/>
<dbReference type="OrthoDB" id="1050434at2759"/>
<dbReference type="PhylomeDB" id="Q38937"/>
<dbReference type="EvolutionaryTrace" id="Q38937"/>
<dbReference type="PRO" id="PR:Q38937"/>
<dbReference type="Proteomes" id="UP000006548">
    <property type="component" value="Chromosome 1"/>
</dbReference>
<dbReference type="ExpressionAtlas" id="Q38937">
    <property type="expression patterns" value="baseline and differential"/>
</dbReference>
<dbReference type="GO" id="GO:0005737">
    <property type="term" value="C:cytoplasm"/>
    <property type="evidence" value="ECO:0000314"/>
    <property type="project" value="UniProtKB"/>
</dbReference>
<dbReference type="GO" id="GO:0005739">
    <property type="term" value="C:mitochondrion"/>
    <property type="evidence" value="ECO:0007005"/>
    <property type="project" value="TAIR"/>
</dbReference>
<dbReference type="GO" id="GO:0005730">
    <property type="term" value="C:nucleolus"/>
    <property type="evidence" value="ECO:0007005"/>
    <property type="project" value="TAIR"/>
</dbReference>
<dbReference type="GO" id="GO:0005634">
    <property type="term" value="C:nucleus"/>
    <property type="evidence" value="ECO:0007005"/>
    <property type="project" value="TAIR"/>
</dbReference>
<dbReference type="GO" id="GO:0009524">
    <property type="term" value="C:phragmoplast"/>
    <property type="evidence" value="ECO:0007005"/>
    <property type="project" value="TAIR"/>
</dbReference>
<dbReference type="GO" id="GO:0005886">
    <property type="term" value="C:plasma membrane"/>
    <property type="evidence" value="ECO:0000314"/>
    <property type="project" value="UniProtKB"/>
</dbReference>
<dbReference type="GO" id="GO:0005525">
    <property type="term" value="F:GTP binding"/>
    <property type="evidence" value="ECO:0000314"/>
    <property type="project" value="UniProtKB"/>
</dbReference>
<dbReference type="GO" id="GO:0003924">
    <property type="term" value="F:GTPase activity"/>
    <property type="evidence" value="ECO:0000250"/>
    <property type="project" value="TAIR"/>
</dbReference>
<dbReference type="GO" id="GO:0019901">
    <property type="term" value="F:protein kinase binding"/>
    <property type="evidence" value="ECO:0000353"/>
    <property type="project" value="UniProtKB"/>
</dbReference>
<dbReference type="GO" id="GO:0009860">
    <property type="term" value="P:pollen tube growth"/>
    <property type="evidence" value="ECO:0000315"/>
    <property type="project" value="TAIR"/>
</dbReference>
<dbReference type="GO" id="GO:0048767">
    <property type="term" value="P:root hair elongation"/>
    <property type="evidence" value="ECO:0000315"/>
    <property type="project" value="UniProtKB"/>
</dbReference>
<dbReference type="GO" id="GO:0048766">
    <property type="term" value="P:root hair initiation"/>
    <property type="evidence" value="ECO:0000315"/>
    <property type="project" value="UniProtKB"/>
</dbReference>
<dbReference type="GO" id="GO:0007264">
    <property type="term" value="P:small GTPase-mediated signal transduction"/>
    <property type="evidence" value="ECO:0007669"/>
    <property type="project" value="InterPro"/>
</dbReference>
<dbReference type="CDD" id="cd04133">
    <property type="entry name" value="Rop_like"/>
    <property type="match status" value="1"/>
</dbReference>
<dbReference type="FunFam" id="3.40.50.300:FF:000535">
    <property type="entry name" value="rac-like GTP-binding protein RAC2"/>
    <property type="match status" value="1"/>
</dbReference>
<dbReference type="Gene3D" id="3.40.50.300">
    <property type="entry name" value="P-loop containing nucleotide triphosphate hydrolases"/>
    <property type="match status" value="1"/>
</dbReference>
<dbReference type="InterPro" id="IPR027417">
    <property type="entry name" value="P-loop_NTPase"/>
</dbReference>
<dbReference type="InterPro" id="IPR005225">
    <property type="entry name" value="Small_GTP-bd"/>
</dbReference>
<dbReference type="InterPro" id="IPR001806">
    <property type="entry name" value="Small_GTPase"/>
</dbReference>
<dbReference type="InterPro" id="IPR003578">
    <property type="entry name" value="Small_GTPase_Rho"/>
</dbReference>
<dbReference type="NCBIfam" id="TIGR00231">
    <property type="entry name" value="small_GTP"/>
    <property type="match status" value="1"/>
</dbReference>
<dbReference type="PANTHER" id="PTHR24072">
    <property type="entry name" value="RHO FAMILY GTPASE"/>
    <property type="match status" value="1"/>
</dbReference>
<dbReference type="Pfam" id="PF00071">
    <property type="entry name" value="Ras"/>
    <property type="match status" value="1"/>
</dbReference>
<dbReference type="PRINTS" id="PR00449">
    <property type="entry name" value="RASTRNSFRMNG"/>
</dbReference>
<dbReference type="SMART" id="SM00175">
    <property type="entry name" value="RAB"/>
    <property type="match status" value="1"/>
</dbReference>
<dbReference type="SMART" id="SM00173">
    <property type="entry name" value="RAS"/>
    <property type="match status" value="1"/>
</dbReference>
<dbReference type="SMART" id="SM00174">
    <property type="entry name" value="RHO"/>
    <property type="match status" value="1"/>
</dbReference>
<dbReference type="SUPFAM" id="SSF52540">
    <property type="entry name" value="P-loop containing nucleoside triphosphate hydrolases"/>
    <property type="match status" value="1"/>
</dbReference>
<dbReference type="PROSITE" id="PS51420">
    <property type="entry name" value="RHO"/>
    <property type="match status" value="1"/>
</dbReference>
<gene>
    <name evidence="13" type="primary">ARAC5</name>
    <name evidence="12" type="synonym">ATGP3</name>
    <name evidence="10" type="synonym">ROP4</name>
    <name evidence="15" type="ordered locus">At1g75840</name>
    <name evidence="16" type="ORF">T4O12.8</name>
</gene>
<proteinExistence type="evidence at protein level"/>
<sequence>MSASRFIKCVTVGDGAVGKTCMLISYTSNTFPTDYVPTVFDNFSANVVVDGNTVNLGLWDTAGQEDYNRLRPLSYRGADVFILAFSLISKASYENVAKKWIPELRHYAPGVPIILVGTKLDLRDDKQFFIDHPGAVPITTNQGEELKKLIGSPIYIECSSKTQQNVKAVFDAAIKVVLQPPKQKKKKKNKNRCVFL</sequence>
<evidence type="ECO:0000250" key="1">
    <source>
        <dbReference type="UniProtKB" id="Q38919"/>
    </source>
</evidence>
<evidence type="ECO:0000255" key="2"/>
<evidence type="ECO:0000269" key="3">
    <source>
    </source>
</evidence>
<evidence type="ECO:0000269" key="4">
    <source>
    </source>
</evidence>
<evidence type="ECO:0000269" key="5">
    <source>
    </source>
</evidence>
<evidence type="ECO:0000269" key="6">
    <source>
    </source>
</evidence>
<evidence type="ECO:0000269" key="7">
    <source>
    </source>
</evidence>
<evidence type="ECO:0000269" key="8">
    <source>
    </source>
</evidence>
<evidence type="ECO:0000269" key="9">
    <source>
    </source>
</evidence>
<evidence type="ECO:0000303" key="10">
    <source>
    </source>
</evidence>
<evidence type="ECO:0000303" key="11">
    <source>
    </source>
</evidence>
<evidence type="ECO:0000303" key="12">
    <source>
    </source>
</evidence>
<evidence type="ECO:0000303" key="13">
    <source>
    </source>
</evidence>
<evidence type="ECO:0000305" key="14"/>
<evidence type="ECO:0000312" key="15">
    <source>
        <dbReference type="Araport" id="AT1G75840"/>
    </source>
</evidence>
<evidence type="ECO:0000312" key="16">
    <source>
        <dbReference type="EMBL" id="AAF26755.1"/>
    </source>
</evidence>
<evidence type="ECO:0007829" key="17">
    <source>
        <dbReference type="PDB" id="2NTY"/>
    </source>
</evidence>